<keyword id="KW-0963">Cytoplasm</keyword>
<keyword id="KW-0236">DNA replication inhibitor</keyword>
<keyword id="KW-0238">DNA-binding</keyword>
<gene>
    <name evidence="1" type="primary">seqA</name>
    <name type="ordered locus">PAJ_0475</name>
</gene>
<organism>
    <name type="scientific">Pantoea ananatis (strain AJ13355)</name>
    <dbReference type="NCBI Taxonomy" id="932677"/>
    <lineage>
        <taxon>Bacteria</taxon>
        <taxon>Pseudomonadati</taxon>
        <taxon>Pseudomonadota</taxon>
        <taxon>Gammaproteobacteria</taxon>
        <taxon>Enterobacterales</taxon>
        <taxon>Erwiniaceae</taxon>
        <taxon>Pantoea</taxon>
    </lineage>
</organism>
<accession>F2EP55</accession>
<feature type="chain" id="PRO_0000413928" description="Negative modulator of initiation of replication">
    <location>
        <begin position="1"/>
        <end position="183"/>
    </location>
</feature>
<feature type="region of interest" description="Disordered" evidence="2">
    <location>
        <begin position="43"/>
        <end position="70"/>
    </location>
</feature>
<feature type="region of interest" description="Interaction with DNA" evidence="1">
    <location>
        <begin position="89"/>
        <end position="90"/>
    </location>
</feature>
<feature type="region of interest" description="Interaction with DNA" evidence="1">
    <location>
        <begin position="118"/>
        <end position="122"/>
    </location>
</feature>
<feature type="region of interest" description="Interaction with DNA" evidence="1">
    <location>
        <begin position="152"/>
        <end position="158"/>
    </location>
</feature>
<feature type="compositionally biased region" description="Low complexity" evidence="2">
    <location>
        <begin position="50"/>
        <end position="61"/>
    </location>
</feature>
<reference key="1">
    <citation type="journal article" date="2012" name="Appl. Microbiol. Biotechnol.">
        <title>The complete genome sequence of Pantoea ananatis AJ13355, an organism with great biotechnological potential.</title>
        <authorList>
            <person name="Hara Y."/>
            <person name="Kadotani N."/>
            <person name="Izui H."/>
            <person name="Katashkina J.I."/>
            <person name="Kuvaeva T.M."/>
            <person name="Andreeva I.G."/>
            <person name="Golubeva L.I."/>
            <person name="Malko D.B."/>
            <person name="Makeev V.J."/>
            <person name="Mashko S.V."/>
            <person name="Kozlov Y.I."/>
        </authorList>
    </citation>
    <scope>NUCLEOTIDE SEQUENCE [LARGE SCALE GENOMIC DNA]</scope>
    <source>
        <strain>AJ13355</strain>
    </source>
</reference>
<evidence type="ECO:0000255" key="1">
    <source>
        <dbReference type="HAMAP-Rule" id="MF_00908"/>
    </source>
</evidence>
<evidence type="ECO:0000256" key="2">
    <source>
        <dbReference type="SAM" id="MobiDB-lite"/>
    </source>
</evidence>
<evidence type="ECO:0000305" key="3"/>
<proteinExistence type="inferred from homology"/>
<name>SEQA_PANAA</name>
<dbReference type="EMBL" id="AP012032">
    <property type="protein sequence ID" value="BAK10555.1"/>
    <property type="status" value="ALT_INIT"/>
    <property type="molecule type" value="Genomic_DNA"/>
</dbReference>
<dbReference type="RefSeq" id="WP_019104980.1">
    <property type="nucleotide sequence ID" value="NC_017531.2"/>
</dbReference>
<dbReference type="SMR" id="F2EP55"/>
<dbReference type="KEGG" id="paj:PAJ_0475"/>
<dbReference type="PATRIC" id="fig|553.3.peg.3157"/>
<dbReference type="eggNOG" id="COG3057">
    <property type="taxonomic scope" value="Bacteria"/>
</dbReference>
<dbReference type="HOGENOM" id="CLU_099733_0_0_6"/>
<dbReference type="OrthoDB" id="5591069at2"/>
<dbReference type="Proteomes" id="UP000006690">
    <property type="component" value="Chromosome"/>
</dbReference>
<dbReference type="GO" id="GO:0005737">
    <property type="term" value="C:cytoplasm"/>
    <property type="evidence" value="ECO:0007669"/>
    <property type="project" value="UniProtKB-SubCell"/>
</dbReference>
<dbReference type="GO" id="GO:0043565">
    <property type="term" value="F:sequence-specific DNA binding"/>
    <property type="evidence" value="ECO:0007669"/>
    <property type="project" value="UniProtKB-ARBA"/>
</dbReference>
<dbReference type="GO" id="GO:0032297">
    <property type="term" value="P:negative regulation of DNA-templated DNA replication initiation"/>
    <property type="evidence" value="ECO:0007669"/>
    <property type="project" value="UniProtKB-UniRule"/>
</dbReference>
<dbReference type="GO" id="GO:0006355">
    <property type="term" value="P:regulation of DNA-templated transcription"/>
    <property type="evidence" value="ECO:0007669"/>
    <property type="project" value="InterPro"/>
</dbReference>
<dbReference type="FunFam" id="1.10.1220.10:FF:000002">
    <property type="entry name" value="Negative modulator of initiation of replication"/>
    <property type="match status" value="1"/>
</dbReference>
<dbReference type="FunFam" id="1.20.1380.10:FF:000001">
    <property type="entry name" value="Negative modulator of initiation of replication"/>
    <property type="match status" value="1"/>
</dbReference>
<dbReference type="Gene3D" id="1.10.1220.10">
    <property type="entry name" value="Met repressor-like"/>
    <property type="match status" value="1"/>
</dbReference>
<dbReference type="Gene3D" id="1.20.1380.10">
    <property type="entry name" value="Replication modulator SeqA, C-terminal DNA-binding domain"/>
    <property type="match status" value="1"/>
</dbReference>
<dbReference type="HAMAP" id="MF_00908">
    <property type="entry name" value="SeqA"/>
    <property type="match status" value="1"/>
</dbReference>
<dbReference type="InterPro" id="IPR013321">
    <property type="entry name" value="Arc_rbn_hlx_hlx"/>
</dbReference>
<dbReference type="InterPro" id="IPR010985">
    <property type="entry name" value="Ribbon_hlx_hlx"/>
</dbReference>
<dbReference type="InterPro" id="IPR005621">
    <property type="entry name" value="SeqA"/>
</dbReference>
<dbReference type="InterPro" id="IPR026577">
    <property type="entry name" value="SeqA_DNA-bd_C"/>
</dbReference>
<dbReference type="InterPro" id="IPR036835">
    <property type="entry name" value="SeqA_DNA-bd_C_sf"/>
</dbReference>
<dbReference type="InterPro" id="IPR033761">
    <property type="entry name" value="SeqA_N"/>
</dbReference>
<dbReference type="NCBIfam" id="NF008389">
    <property type="entry name" value="PRK11187.1"/>
    <property type="match status" value="1"/>
</dbReference>
<dbReference type="Pfam" id="PF03925">
    <property type="entry name" value="SeqA"/>
    <property type="match status" value="1"/>
</dbReference>
<dbReference type="Pfam" id="PF17206">
    <property type="entry name" value="SeqA_N"/>
    <property type="match status" value="1"/>
</dbReference>
<dbReference type="PIRSF" id="PIRSF019401">
    <property type="entry name" value="SeqA"/>
    <property type="match status" value="1"/>
</dbReference>
<dbReference type="SUPFAM" id="SSF82808">
    <property type="entry name" value="Replication modulator SeqA, C-terminal DNA-binding domain"/>
    <property type="match status" value="1"/>
</dbReference>
<dbReference type="SUPFAM" id="SSF47598">
    <property type="entry name" value="Ribbon-helix-helix"/>
    <property type="match status" value="1"/>
</dbReference>
<sequence length="183" mass="20422">MKTIEVDEELYRYIASHTQHIGESASDILRRMLKFTAGQPAAVNDTQPVSAPAPSKAAPSAGNESRPQDRVRAVRELMLSDEYAEQKRAVNRFMLILSTLYRLDTAAFAEATTSLQGRTRIYFAGDEHTLLQSGTHTKPKHVPGTPYWVITNTNTGRKRSMVEHIMLSMQFPSELAEKVCGTI</sequence>
<protein>
    <recommendedName>
        <fullName evidence="1">Negative modulator of initiation of replication</fullName>
    </recommendedName>
</protein>
<comment type="function">
    <text evidence="1">Negative regulator of replication initiation, which contributes to regulation of DNA replication and ensures that replication initiation occurs exactly once per chromosome per cell cycle. Binds to pairs of hemimethylated GATC sequences in the oriC region, thus preventing assembly of replication proteins and re-initiation at newly replicated origins. Repression is relieved when the region becomes fully methylated.</text>
</comment>
<comment type="subunit">
    <text evidence="1">Homodimer. Polymerizes to form helical filaments.</text>
</comment>
<comment type="subcellular location">
    <subcellularLocation>
        <location evidence="1">Cytoplasm</location>
    </subcellularLocation>
</comment>
<comment type="similarity">
    <text evidence="1">Belongs to the SeqA family.</text>
</comment>
<comment type="sequence caution" evidence="3">
    <conflict type="erroneous initiation">
        <sequence resource="EMBL-CDS" id="BAK10555"/>
    </conflict>
    <text>Extended N-terminus.</text>
</comment>